<accession>Q6X9T7</accession>
<gene>
    <name evidence="6" type="primary">Tyrobp</name>
    <name evidence="1" type="synonym">Dap12</name>
</gene>
<protein>
    <recommendedName>
        <fullName evidence="6">TYRO protein tyrosine kinase-binding protein</fullName>
    </recommendedName>
    <alternativeName>
        <fullName evidence="1">DNAX-activation protein 12</fullName>
    </alternativeName>
</protein>
<proteinExistence type="inferred from homology"/>
<sequence>MGAPEPSWCFLFLPVLLTVGGLSPVQAQSDNYPGCECSSVSPGVLAGIVLGDLVLTLLIALAVYSLGRLVSRGRGTADGTRKQHMAETESPYQELQGQRPEVYSDLNTQRQYYR</sequence>
<keyword id="KW-0106">Calcium</keyword>
<keyword id="KW-1003">Cell membrane</keyword>
<keyword id="KW-1015">Disulfide bond</keyword>
<keyword id="KW-0391">Immunity</keyword>
<keyword id="KW-0472">Membrane</keyword>
<keyword id="KW-0479">Metal-binding</keyword>
<keyword id="KW-0597">Phosphoprotein</keyword>
<keyword id="KW-1185">Reference proteome</keyword>
<keyword id="KW-0732">Signal</keyword>
<keyword id="KW-0812">Transmembrane</keyword>
<keyword id="KW-1133">Transmembrane helix</keyword>
<evidence type="ECO:0000250" key="1">
    <source>
        <dbReference type="UniProtKB" id="O43914"/>
    </source>
</evidence>
<evidence type="ECO:0000250" key="2">
    <source>
        <dbReference type="UniProtKB" id="O54885"/>
    </source>
</evidence>
<evidence type="ECO:0000255" key="3"/>
<evidence type="ECO:0000256" key="4">
    <source>
        <dbReference type="SAM" id="MobiDB-lite"/>
    </source>
</evidence>
<evidence type="ECO:0000305" key="5"/>
<evidence type="ECO:0000312" key="6">
    <source>
        <dbReference type="RGD" id="1303081"/>
    </source>
</evidence>
<comment type="function">
    <text evidence="1 2">Adapter protein which non-covalently associates with activating receptors found on the surface of a variety of immune cells to mediate signaling and cell activation following ligand binding by the receptors (By similarity). TYROBP is tyrosine-phosphorylated in the ITAM domain following ligand binding by the associated receptors which leads to activation of additional tyrosine kinases and subsequent cell activation (By similarity). Also has an inhibitory role in some cells (By similarity). Non-covalently associates with activating receptors of the CD300 family to mediate cell activation (By similarity). Also mediates cell activation through association with activating receptors of the CD200R family (By similarity). Required for neutrophil activation mediated by integrin (By similarity). Required for the activation of myeloid cells mediated by the CLEC5A/MDL1 receptor (By similarity). Associates with natural killer (NK) cell receptors such as the KLRD1/KLRC2 heterodimer to mediate NK cell activation (By similarity). Associates with TREM1 to mediate activation of neutrophils and monocytes (By similarity). Associates with TREM2 on monocyte-derived dendritic cells to mediate up-regulation of chemokine receptor CCR7 and dendritic cell maturation and survival (By similarity). PAssociation with TREM2 mediates cytokine-induced formation of multinucleated giant cells which are formed by the fusion of macrophages (By similarity). Stabilizes the TREM2 C-terminal fragment (TREM2-CTF) produced by TREM2 ectodomain shedding which suppresses the release of pro-inflammatory cytokines (By similarity). In microglia, required with TREM2 for phagocytosis of apoptotic neurons (By similarity). Required with ITGAM/CD11B in microglia to control production of microglial superoxide ions which promote the neuronal apoptosis that occurs during brain development (By similarity). Promotes pro-inflammatory responses in microglia following nerve injury which accelerates degeneration of injured neurons (By similarity). ositively regulates the expression of the IRAK3/IRAK-M kinase and IL10 production by liver dendritic cells and inhibits their T cell allosimulatory ability (By similarity). Negatively regulates B cell proliferation (By similarity). Required for CSF1-mediated osteoclast cytoskeletal organization (By similarity). Positively regulates multinucleation during osteoclast development (By similarity).</text>
</comment>
<comment type="subunit">
    <text evidence="1 2">Homodimer; disulfide-linked (By similarity). Homotrimer; disulfide-linked (By similarity). Homotetramer; disulfide-linked (By similarity). Homotrimers and homotetramers form when low levels of partner receptors are available and is competitive with assembly with interacting receptors (By similarity). They may represent alternative oligomerization states or may be intermediates in the receptor assembly process (By similarity). Binding of a metal cation aids in homooligomerization through coordination of the metal ion by the subunits of the oligomer (By similarity). Interacts with TREM1 (By similarity). Interacts with TREM2 (By similarity). Interacts with CLECSF5 (By similarity). Interacts with CD300LB and CD300C2 (By similarity). Interacts with CD300E (By similarity). Interacts (via ITAM domain) with SYK (via SH2 domains); activates SYK mediating neutrophils and macrophages integrin-mediated activation (By similarity). Interacts with KLRC2 (By similarity). Interacts with CD300H (By similarity). Interacts with KLRD1 (By similarity). Interacts with SIGLEC1 (By similarity).</text>
</comment>
<comment type="subcellular location">
    <subcellularLocation>
        <location evidence="1">Cell membrane</location>
        <topology evidence="3">Single-pass type I membrane protein</topology>
    </subcellularLocation>
</comment>
<comment type="PTM">
    <text evidence="1">Following ligand binding by associated receptors, tyrosine phosphorylated in the ITAM domain which leads to activation of additional tyrosine kinases and subsequent cell activation.</text>
</comment>
<comment type="similarity">
    <text evidence="5">Belongs to the TYROBP family.</text>
</comment>
<name>TYOBP_RAT</name>
<organism>
    <name type="scientific">Rattus norvegicus</name>
    <name type="common">Rat</name>
    <dbReference type="NCBI Taxonomy" id="10116"/>
    <lineage>
        <taxon>Eukaryota</taxon>
        <taxon>Metazoa</taxon>
        <taxon>Chordata</taxon>
        <taxon>Craniata</taxon>
        <taxon>Vertebrata</taxon>
        <taxon>Euteleostomi</taxon>
        <taxon>Mammalia</taxon>
        <taxon>Eutheria</taxon>
        <taxon>Euarchontoglires</taxon>
        <taxon>Glires</taxon>
        <taxon>Rodentia</taxon>
        <taxon>Myomorpha</taxon>
        <taxon>Muroidea</taxon>
        <taxon>Muridae</taxon>
        <taxon>Murinae</taxon>
        <taxon>Rattus</taxon>
    </lineage>
</organism>
<dbReference type="EMBL" id="AY247021">
    <property type="protein sequence ID" value="AAP79987.1"/>
    <property type="molecule type" value="mRNA"/>
</dbReference>
<dbReference type="RefSeq" id="NP_997690.1">
    <property type="nucleotide sequence ID" value="NM_212525.1"/>
</dbReference>
<dbReference type="SMR" id="Q6X9T7"/>
<dbReference type="FunCoup" id="Q6X9T7">
    <property type="interactions" value="262"/>
</dbReference>
<dbReference type="STRING" id="10116.ENSRNOP00000028284"/>
<dbReference type="PhosphoSitePlus" id="Q6X9T7"/>
<dbReference type="PaxDb" id="10116-ENSRNOP00000028284"/>
<dbReference type="Ensembl" id="ENSRNOT00000028284.7">
    <property type="protein sequence ID" value="ENSRNOP00000028284.3"/>
    <property type="gene ID" value="ENSRNOG00000020845.7"/>
</dbReference>
<dbReference type="GeneID" id="361537"/>
<dbReference type="KEGG" id="rno:361537"/>
<dbReference type="UCSC" id="RGD:1303081">
    <property type="organism name" value="rat"/>
</dbReference>
<dbReference type="AGR" id="RGD:1303081"/>
<dbReference type="CTD" id="7305"/>
<dbReference type="RGD" id="1303081">
    <property type="gene designation" value="Tyrobp"/>
</dbReference>
<dbReference type="eggNOG" id="ENOG502SCVI">
    <property type="taxonomic scope" value="Eukaryota"/>
</dbReference>
<dbReference type="GeneTree" id="ENSGT00390000016786"/>
<dbReference type="HOGENOM" id="CLU_141718_0_0_1"/>
<dbReference type="InParanoid" id="Q6X9T7"/>
<dbReference type="OMA" id="QRQPYYK"/>
<dbReference type="OrthoDB" id="9901873at2759"/>
<dbReference type="PhylomeDB" id="Q6X9T7"/>
<dbReference type="TreeFam" id="TF336898"/>
<dbReference type="Reactome" id="R-RNO-198933">
    <property type="pathway name" value="Immunoregulatory interactions between a Lymphoid and a non-Lymphoid cell"/>
</dbReference>
<dbReference type="Reactome" id="R-RNO-2172127">
    <property type="pathway name" value="DAP12 interactions"/>
</dbReference>
<dbReference type="Reactome" id="R-RNO-2424491">
    <property type="pathway name" value="DAP12 signaling"/>
</dbReference>
<dbReference type="Reactome" id="R-RNO-391160">
    <property type="pathway name" value="Signal regulatory protein family interactions"/>
</dbReference>
<dbReference type="Reactome" id="R-RNO-416700">
    <property type="pathway name" value="Other semaphorin interactions"/>
</dbReference>
<dbReference type="Reactome" id="R-RNO-6798695">
    <property type="pathway name" value="Neutrophil degranulation"/>
</dbReference>
<dbReference type="PRO" id="PR:Q6X9T7"/>
<dbReference type="Proteomes" id="UP000002494">
    <property type="component" value="Chromosome 1"/>
</dbReference>
<dbReference type="Bgee" id="ENSRNOG00000020845">
    <property type="expression patterns" value="Expressed in spleen and 20 other cell types or tissues"/>
</dbReference>
<dbReference type="GO" id="GO:0009986">
    <property type="term" value="C:cell surface"/>
    <property type="evidence" value="ECO:0000250"/>
    <property type="project" value="UniProtKB"/>
</dbReference>
<dbReference type="GO" id="GO:0005886">
    <property type="term" value="C:plasma membrane"/>
    <property type="evidence" value="ECO:0000250"/>
    <property type="project" value="UniProtKB"/>
</dbReference>
<dbReference type="GO" id="GO:0042802">
    <property type="term" value="F:identical protein binding"/>
    <property type="evidence" value="ECO:0000266"/>
    <property type="project" value="RGD"/>
</dbReference>
<dbReference type="GO" id="GO:0046872">
    <property type="term" value="F:metal ion binding"/>
    <property type="evidence" value="ECO:0007669"/>
    <property type="project" value="UniProtKB-KW"/>
</dbReference>
<dbReference type="GO" id="GO:0060090">
    <property type="term" value="F:molecular adaptor activity"/>
    <property type="evidence" value="ECO:0000266"/>
    <property type="project" value="RGD"/>
</dbReference>
<dbReference type="GO" id="GO:0042803">
    <property type="term" value="F:protein homodimerization activity"/>
    <property type="evidence" value="ECO:0000250"/>
    <property type="project" value="UniProtKB"/>
</dbReference>
<dbReference type="GO" id="GO:0030674">
    <property type="term" value="F:protein-macromolecule adaptor activity"/>
    <property type="evidence" value="ECO:0000266"/>
    <property type="project" value="RGD"/>
</dbReference>
<dbReference type="GO" id="GO:0005102">
    <property type="term" value="F:signaling receptor binding"/>
    <property type="evidence" value="ECO:0000266"/>
    <property type="project" value="RGD"/>
</dbReference>
<dbReference type="GO" id="GO:0030036">
    <property type="term" value="P:actin cytoskeleton organization"/>
    <property type="evidence" value="ECO:0000266"/>
    <property type="project" value="RGD"/>
</dbReference>
<dbReference type="GO" id="GO:0097242">
    <property type="term" value="P:amyloid-beta clearance"/>
    <property type="evidence" value="ECO:0000266"/>
    <property type="project" value="RGD"/>
</dbReference>
<dbReference type="GO" id="GO:0043277">
    <property type="term" value="P:apoptotic cell clearance"/>
    <property type="evidence" value="ECO:0000250"/>
    <property type="project" value="UniProtKB"/>
</dbReference>
<dbReference type="GO" id="GO:1904646">
    <property type="term" value="P:cellular response to amyloid-beta"/>
    <property type="evidence" value="ECO:0000266"/>
    <property type="project" value="RGD"/>
</dbReference>
<dbReference type="GO" id="GO:0030900">
    <property type="term" value="P:forebrain development"/>
    <property type="evidence" value="ECO:0000266"/>
    <property type="project" value="RGD"/>
</dbReference>
<dbReference type="GO" id="GO:0007229">
    <property type="term" value="P:integrin-mediated signaling pathway"/>
    <property type="evidence" value="ECO:0000266"/>
    <property type="project" value="RGD"/>
</dbReference>
<dbReference type="GO" id="GO:0002281">
    <property type="term" value="P:macrophage activation involved in immune response"/>
    <property type="evidence" value="ECO:0000266"/>
    <property type="project" value="RGD"/>
</dbReference>
<dbReference type="GO" id="GO:0002282">
    <property type="term" value="P:microglial cell activation involved in immune response"/>
    <property type="evidence" value="ECO:0000266"/>
    <property type="project" value="RGD"/>
</dbReference>
<dbReference type="GO" id="GO:0002274">
    <property type="term" value="P:myeloid leukocyte activation"/>
    <property type="evidence" value="ECO:0000266"/>
    <property type="project" value="RGD"/>
</dbReference>
<dbReference type="GO" id="GO:0002228">
    <property type="term" value="P:natural killer cell mediated immunity"/>
    <property type="evidence" value="ECO:0000266"/>
    <property type="project" value="RGD"/>
</dbReference>
<dbReference type="GO" id="GO:0030889">
    <property type="term" value="P:negative regulation of B cell proliferation"/>
    <property type="evidence" value="ECO:0000266"/>
    <property type="project" value="RGD"/>
</dbReference>
<dbReference type="GO" id="GO:0032693">
    <property type="term" value="P:negative regulation of interleukin-10 production"/>
    <property type="evidence" value="ECO:0000266"/>
    <property type="project" value="RGD"/>
</dbReference>
<dbReference type="GO" id="GO:1900272">
    <property type="term" value="P:negative regulation of long-term synaptic potentiation"/>
    <property type="evidence" value="ECO:0000266"/>
    <property type="project" value="RGD"/>
</dbReference>
<dbReference type="GO" id="GO:0032911">
    <property type="term" value="P:negative regulation of transforming growth factor beta1 production"/>
    <property type="evidence" value="ECO:0000266"/>
    <property type="project" value="RGD"/>
</dbReference>
<dbReference type="GO" id="GO:0032480">
    <property type="term" value="P:negative regulation of type I interferon production"/>
    <property type="evidence" value="ECO:0000266"/>
    <property type="project" value="RGD"/>
</dbReference>
<dbReference type="GO" id="GO:0002283">
    <property type="term" value="P:neutrophil activation involved in immune response"/>
    <property type="evidence" value="ECO:0000266"/>
    <property type="project" value="RGD"/>
</dbReference>
<dbReference type="GO" id="GO:0030316">
    <property type="term" value="P:osteoclast differentiation"/>
    <property type="evidence" value="ECO:0000266"/>
    <property type="project" value="RGD"/>
</dbReference>
<dbReference type="GO" id="GO:0010628">
    <property type="term" value="P:positive regulation of gene expression"/>
    <property type="evidence" value="ECO:0000266"/>
    <property type="project" value="RGD"/>
</dbReference>
<dbReference type="GO" id="GO:0032731">
    <property type="term" value="P:positive regulation of interleukin-1 beta production"/>
    <property type="evidence" value="ECO:0000266"/>
    <property type="project" value="RGD"/>
</dbReference>
<dbReference type="GO" id="GO:0032755">
    <property type="term" value="P:positive regulation of interleukin-6 production"/>
    <property type="evidence" value="ECO:0000266"/>
    <property type="project" value="RGD"/>
</dbReference>
<dbReference type="GO" id="GO:0034241">
    <property type="term" value="P:positive regulation of macrophage fusion"/>
    <property type="evidence" value="ECO:0000266"/>
    <property type="project" value="RGD"/>
</dbReference>
<dbReference type="GO" id="GO:1904151">
    <property type="term" value="P:positive regulation of microglial cell mediated cytotoxicity"/>
    <property type="evidence" value="ECO:0000266"/>
    <property type="project" value="RGD"/>
</dbReference>
<dbReference type="GO" id="GO:0032816">
    <property type="term" value="P:positive regulation of natural killer cell activation"/>
    <property type="evidence" value="ECO:0000266"/>
    <property type="project" value="RGD"/>
</dbReference>
<dbReference type="GO" id="GO:2001206">
    <property type="term" value="P:positive regulation of osteoclast development"/>
    <property type="evidence" value="ECO:0000266"/>
    <property type="project" value="RGD"/>
</dbReference>
<dbReference type="GO" id="GO:2000010">
    <property type="term" value="P:positive regulation of protein localization to cell surface"/>
    <property type="evidence" value="ECO:0000266"/>
    <property type="project" value="RGD"/>
</dbReference>
<dbReference type="GO" id="GO:1902685">
    <property type="term" value="P:positive regulation of receptor localization to synapse"/>
    <property type="evidence" value="ECO:0000266"/>
    <property type="project" value="RGD"/>
</dbReference>
<dbReference type="GO" id="GO:0032930">
    <property type="term" value="P:positive regulation of superoxide anion generation"/>
    <property type="evidence" value="ECO:0000266"/>
    <property type="project" value="RGD"/>
</dbReference>
<dbReference type="GO" id="GO:0032760">
    <property type="term" value="P:positive regulation of tumor necrosis factor production"/>
    <property type="evidence" value="ECO:0000266"/>
    <property type="project" value="RGD"/>
</dbReference>
<dbReference type="GO" id="GO:0050821">
    <property type="term" value="P:protein stabilization"/>
    <property type="evidence" value="ECO:0000266"/>
    <property type="project" value="RGD"/>
</dbReference>
<dbReference type="GO" id="GO:2001204">
    <property type="term" value="P:regulation of osteoclast development"/>
    <property type="evidence" value="ECO:0000266"/>
    <property type="project" value="RGD"/>
</dbReference>
<dbReference type="GO" id="GO:0048678">
    <property type="term" value="P:response to axon injury"/>
    <property type="evidence" value="ECO:0000266"/>
    <property type="project" value="RGD"/>
</dbReference>
<dbReference type="GO" id="GO:0071526">
    <property type="term" value="P:semaphorin-plexin signaling pathway"/>
    <property type="evidence" value="ECO:0000250"/>
    <property type="project" value="UniProtKB"/>
</dbReference>
<dbReference type="GO" id="GO:0002223">
    <property type="term" value="P:stimulatory C-type lectin receptor signaling pathway"/>
    <property type="evidence" value="ECO:0000250"/>
    <property type="project" value="UniProtKB"/>
</dbReference>
<dbReference type="GO" id="GO:0002222">
    <property type="term" value="P:stimulatory killer cell immunoglobulin-like receptor signaling pathway"/>
    <property type="evidence" value="ECO:0000250"/>
    <property type="project" value="UniProtKB"/>
</dbReference>
<dbReference type="GO" id="GO:0002291">
    <property type="term" value="P:T cell activation via T cell receptor contact with antigen bound to MHC molecule on antigen presenting cell"/>
    <property type="evidence" value="ECO:0000250"/>
    <property type="project" value="UniProtKB"/>
</dbReference>
<dbReference type="FunFam" id="1.10.287.770:FF:000004">
    <property type="entry name" value="TYRO protein tyrosine kinase-binding protein"/>
    <property type="match status" value="1"/>
</dbReference>
<dbReference type="Gene3D" id="1.10.287.770">
    <property type="entry name" value="YojJ-like"/>
    <property type="match status" value="1"/>
</dbReference>
<dbReference type="InterPro" id="IPR026200">
    <property type="entry name" value="Tyrobp"/>
</dbReference>
<dbReference type="PANTHER" id="PTHR17554">
    <property type="entry name" value="TYRO PROTEIN TYROSINE KINASE-BINDING PROTEIN"/>
    <property type="match status" value="1"/>
</dbReference>
<dbReference type="PANTHER" id="PTHR17554:SF2">
    <property type="entry name" value="TYRO PROTEIN TYROSINE KINASE-BINDING PROTEIN"/>
    <property type="match status" value="1"/>
</dbReference>
<reference key="1">
    <citation type="submission" date="2003-03" db="EMBL/GenBank/DDBJ databases">
        <title>Molecular cloning of rat DAP10 and DAP12.</title>
        <authorList>
            <person name="Wittmann M.E."/>
            <person name="Bryceson Y.T."/>
            <person name="Dissen E."/>
        </authorList>
    </citation>
    <scope>NUCLEOTIDE SEQUENCE [MRNA]</scope>
    <source>
        <strain>Fischer 344</strain>
    </source>
</reference>
<feature type="signal peptide" evidence="3">
    <location>
        <begin position="1"/>
        <end position="27"/>
    </location>
</feature>
<feature type="chain" id="PRO_0000022607" description="TYRO protein tyrosine kinase-binding protein">
    <location>
        <begin position="28"/>
        <end position="114"/>
    </location>
</feature>
<feature type="topological domain" description="Extracellular" evidence="1">
    <location>
        <begin position="28"/>
        <end position="42"/>
    </location>
</feature>
<feature type="transmembrane region" description="Helical" evidence="1">
    <location>
        <begin position="43"/>
        <end position="63"/>
    </location>
</feature>
<feature type="topological domain" description="Cytoplasmic" evidence="1">
    <location>
        <begin position="64"/>
        <end position="114"/>
    </location>
</feature>
<feature type="domain" description="ITAM">
    <location>
        <begin position="81"/>
        <end position="109"/>
    </location>
</feature>
<feature type="region of interest" description="Disordered" evidence="4">
    <location>
        <begin position="72"/>
        <end position="114"/>
    </location>
</feature>
<feature type="compositionally biased region" description="Polar residues" evidence="4">
    <location>
        <begin position="105"/>
        <end position="114"/>
    </location>
</feature>
<feature type="binding site" evidence="1">
    <location>
        <position position="52"/>
    </location>
    <ligand>
        <name>Ca(2+)</name>
        <dbReference type="ChEBI" id="CHEBI:29108"/>
        <note>ligand shared between two neighboring subunits in homooligomer</note>
    </ligand>
</feature>
<feature type="site" description="Important for interaction with transmembrane receptors" evidence="1">
    <location>
        <position position="56"/>
    </location>
</feature>
<feature type="modified residue" description="Phosphotyrosine" evidence="2">
    <location>
        <position position="92"/>
    </location>
</feature>
<feature type="modified residue" description="Phosphotyrosine" evidence="2">
    <location>
        <position position="103"/>
    </location>
</feature>
<feature type="disulfide bond" description="Interchain" evidence="1">
    <location>
        <position position="37"/>
    </location>
</feature>